<name>ISPF_PSEAB</name>
<comment type="function">
    <text evidence="1">Involved in the biosynthesis of isopentenyl diphosphate (IPP) and dimethylallyl diphosphate (DMAPP), two major building blocks of isoprenoid compounds. Catalyzes the conversion of 4-diphosphocytidyl-2-C-methyl-D-erythritol 2-phosphate (CDP-ME2P) to 2-C-methyl-D-erythritol 2,4-cyclodiphosphate (ME-CPP) with a corresponding release of cytidine 5-monophosphate (CMP).</text>
</comment>
<comment type="catalytic activity">
    <reaction evidence="1">
        <text>4-CDP-2-C-methyl-D-erythritol 2-phosphate = 2-C-methyl-D-erythritol 2,4-cyclic diphosphate + CMP</text>
        <dbReference type="Rhea" id="RHEA:23864"/>
        <dbReference type="ChEBI" id="CHEBI:57919"/>
        <dbReference type="ChEBI" id="CHEBI:58483"/>
        <dbReference type="ChEBI" id="CHEBI:60377"/>
        <dbReference type="EC" id="4.6.1.12"/>
    </reaction>
</comment>
<comment type="cofactor">
    <cofactor evidence="1">
        <name>a divalent metal cation</name>
        <dbReference type="ChEBI" id="CHEBI:60240"/>
    </cofactor>
    <text evidence="1">Binds 1 divalent metal cation per subunit.</text>
</comment>
<comment type="pathway">
    <text evidence="1">Isoprenoid biosynthesis; isopentenyl diphosphate biosynthesis via DXP pathway; isopentenyl diphosphate from 1-deoxy-D-xylulose 5-phosphate: step 4/6.</text>
</comment>
<comment type="subunit">
    <text evidence="1">Homotrimer.</text>
</comment>
<comment type="similarity">
    <text evidence="1">Belongs to the IspF family.</text>
</comment>
<accession>Q02R99</accession>
<sequence>MRIGHGYDVHRFGEGDFITLGGVRIPHKHGLVAHSDGDVLLHALSDALLGAAALGDIGKHFPDTDPRFKGADSRALLRHVVAIVAEKGWKVGNVDATIVAQAPKMAPHIETMRGSIAEDLGVAVDQVNVKATTTERLGFTGREEGIAVHAVALLMAR</sequence>
<feature type="chain" id="PRO_1000022861" description="2-C-methyl-D-erythritol 2,4-cyclodiphosphate synthase">
    <location>
        <begin position="1"/>
        <end position="157"/>
    </location>
</feature>
<feature type="binding site" evidence="1">
    <location>
        <begin position="8"/>
        <end position="10"/>
    </location>
    <ligand>
        <name>4-CDP-2-C-methyl-D-erythritol 2-phosphate</name>
        <dbReference type="ChEBI" id="CHEBI:57919"/>
    </ligand>
</feature>
<feature type="binding site" evidence="1">
    <location>
        <position position="8"/>
    </location>
    <ligand>
        <name>a divalent metal cation</name>
        <dbReference type="ChEBI" id="CHEBI:60240"/>
    </ligand>
</feature>
<feature type="binding site" evidence="1">
    <location>
        <position position="10"/>
    </location>
    <ligand>
        <name>a divalent metal cation</name>
        <dbReference type="ChEBI" id="CHEBI:60240"/>
    </ligand>
</feature>
<feature type="binding site" evidence="1">
    <location>
        <begin position="34"/>
        <end position="35"/>
    </location>
    <ligand>
        <name>4-CDP-2-C-methyl-D-erythritol 2-phosphate</name>
        <dbReference type="ChEBI" id="CHEBI:57919"/>
    </ligand>
</feature>
<feature type="binding site" evidence="1">
    <location>
        <position position="42"/>
    </location>
    <ligand>
        <name>a divalent metal cation</name>
        <dbReference type="ChEBI" id="CHEBI:60240"/>
    </ligand>
</feature>
<feature type="binding site" evidence="1">
    <location>
        <begin position="56"/>
        <end position="58"/>
    </location>
    <ligand>
        <name>4-CDP-2-C-methyl-D-erythritol 2-phosphate</name>
        <dbReference type="ChEBI" id="CHEBI:57919"/>
    </ligand>
</feature>
<feature type="binding site" evidence="1">
    <location>
        <begin position="61"/>
        <end position="65"/>
    </location>
    <ligand>
        <name>4-CDP-2-C-methyl-D-erythritol 2-phosphate</name>
        <dbReference type="ChEBI" id="CHEBI:57919"/>
    </ligand>
</feature>
<feature type="binding site" evidence="1">
    <location>
        <begin position="100"/>
        <end position="106"/>
    </location>
    <ligand>
        <name>4-CDP-2-C-methyl-D-erythritol 2-phosphate</name>
        <dbReference type="ChEBI" id="CHEBI:57919"/>
    </ligand>
</feature>
<feature type="binding site" evidence="1">
    <location>
        <begin position="132"/>
        <end position="135"/>
    </location>
    <ligand>
        <name>4-CDP-2-C-methyl-D-erythritol 2-phosphate</name>
        <dbReference type="ChEBI" id="CHEBI:57919"/>
    </ligand>
</feature>
<feature type="binding site" evidence="1">
    <location>
        <position position="139"/>
    </location>
    <ligand>
        <name>4-CDP-2-C-methyl-D-erythritol 2-phosphate</name>
        <dbReference type="ChEBI" id="CHEBI:57919"/>
    </ligand>
</feature>
<feature type="binding site" evidence="1">
    <location>
        <position position="142"/>
    </location>
    <ligand>
        <name>4-CDP-2-C-methyl-D-erythritol 2-phosphate</name>
        <dbReference type="ChEBI" id="CHEBI:57919"/>
    </ligand>
</feature>
<feature type="site" description="Transition state stabilizer" evidence="1">
    <location>
        <position position="34"/>
    </location>
</feature>
<feature type="site" description="Transition state stabilizer" evidence="1">
    <location>
        <position position="133"/>
    </location>
</feature>
<gene>
    <name evidence="1" type="primary">ispF</name>
    <name type="ordered locus">PA14_17420</name>
</gene>
<protein>
    <recommendedName>
        <fullName evidence="1">2-C-methyl-D-erythritol 2,4-cyclodiphosphate synthase</fullName>
        <shortName evidence="1">MECDP-synthase</shortName>
        <shortName evidence="1">MECPP-synthase</shortName>
        <shortName evidence="1">MECPS</shortName>
        <ecNumber evidence="1">4.6.1.12</ecNumber>
    </recommendedName>
</protein>
<evidence type="ECO:0000255" key="1">
    <source>
        <dbReference type="HAMAP-Rule" id="MF_00107"/>
    </source>
</evidence>
<reference key="1">
    <citation type="journal article" date="2006" name="Genome Biol.">
        <title>Genomic analysis reveals that Pseudomonas aeruginosa virulence is combinatorial.</title>
        <authorList>
            <person name="Lee D.G."/>
            <person name="Urbach J.M."/>
            <person name="Wu G."/>
            <person name="Liberati N.T."/>
            <person name="Feinbaum R.L."/>
            <person name="Miyata S."/>
            <person name="Diggins L.T."/>
            <person name="He J."/>
            <person name="Saucier M."/>
            <person name="Deziel E."/>
            <person name="Friedman L."/>
            <person name="Li L."/>
            <person name="Grills G."/>
            <person name="Montgomery K."/>
            <person name="Kucherlapati R."/>
            <person name="Rahme L.G."/>
            <person name="Ausubel F.M."/>
        </authorList>
    </citation>
    <scope>NUCLEOTIDE SEQUENCE [LARGE SCALE GENOMIC DNA]</scope>
    <source>
        <strain>UCBPP-PA14</strain>
    </source>
</reference>
<dbReference type="EC" id="4.6.1.12" evidence="1"/>
<dbReference type="EMBL" id="CP000438">
    <property type="protein sequence ID" value="ABJ12860.1"/>
    <property type="molecule type" value="Genomic_DNA"/>
</dbReference>
<dbReference type="RefSeq" id="WP_003092346.1">
    <property type="nucleotide sequence ID" value="NZ_CP034244.1"/>
</dbReference>
<dbReference type="SMR" id="Q02R99"/>
<dbReference type="KEGG" id="pau:PA14_17420"/>
<dbReference type="PseudoCAP" id="PA14_17420"/>
<dbReference type="HOGENOM" id="CLU_084630_2_0_6"/>
<dbReference type="BioCyc" id="PAER208963:G1G74-1434-MONOMER"/>
<dbReference type="UniPathway" id="UPA00056">
    <property type="reaction ID" value="UER00095"/>
</dbReference>
<dbReference type="Proteomes" id="UP000000653">
    <property type="component" value="Chromosome"/>
</dbReference>
<dbReference type="GO" id="GO:0008685">
    <property type="term" value="F:2-C-methyl-D-erythritol 2,4-cyclodiphosphate synthase activity"/>
    <property type="evidence" value="ECO:0007669"/>
    <property type="project" value="UniProtKB-UniRule"/>
</dbReference>
<dbReference type="GO" id="GO:0046872">
    <property type="term" value="F:metal ion binding"/>
    <property type="evidence" value="ECO:0007669"/>
    <property type="project" value="UniProtKB-KW"/>
</dbReference>
<dbReference type="GO" id="GO:0019288">
    <property type="term" value="P:isopentenyl diphosphate biosynthetic process, methylerythritol 4-phosphate pathway"/>
    <property type="evidence" value="ECO:0007669"/>
    <property type="project" value="UniProtKB-UniRule"/>
</dbReference>
<dbReference type="GO" id="GO:0016114">
    <property type="term" value="P:terpenoid biosynthetic process"/>
    <property type="evidence" value="ECO:0007669"/>
    <property type="project" value="InterPro"/>
</dbReference>
<dbReference type="CDD" id="cd00554">
    <property type="entry name" value="MECDP_synthase"/>
    <property type="match status" value="1"/>
</dbReference>
<dbReference type="FunFam" id="3.30.1330.50:FF:000001">
    <property type="entry name" value="2-C-methyl-D-erythritol 2,4-cyclodiphosphate synthase"/>
    <property type="match status" value="1"/>
</dbReference>
<dbReference type="Gene3D" id="3.30.1330.50">
    <property type="entry name" value="2-C-methyl-D-erythritol 2,4-cyclodiphosphate synthase"/>
    <property type="match status" value="1"/>
</dbReference>
<dbReference type="HAMAP" id="MF_00107">
    <property type="entry name" value="IspF"/>
    <property type="match status" value="1"/>
</dbReference>
<dbReference type="InterPro" id="IPR003526">
    <property type="entry name" value="MECDP_synthase"/>
</dbReference>
<dbReference type="InterPro" id="IPR020555">
    <property type="entry name" value="MECDP_synthase_CS"/>
</dbReference>
<dbReference type="InterPro" id="IPR036571">
    <property type="entry name" value="MECDP_synthase_sf"/>
</dbReference>
<dbReference type="NCBIfam" id="TIGR00151">
    <property type="entry name" value="ispF"/>
    <property type="match status" value="1"/>
</dbReference>
<dbReference type="PANTHER" id="PTHR43181">
    <property type="entry name" value="2-C-METHYL-D-ERYTHRITOL 2,4-CYCLODIPHOSPHATE SYNTHASE, CHLOROPLASTIC"/>
    <property type="match status" value="1"/>
</dbReference>
<dbReference type="PANTHER" id="PTHR43181:SF1">
    <property type="entry name" value="2-C-METHYL-D-ERYTHRITOL 2,4-CYCLODIPHOSPHATE SYNTHASE, CHLOROPLASTIC"/>
    <property type="match status" value="1"/>
</dbReference>
<dbReference type="Pfam" id="PF02542">
    <property type="entry name" value="YgbB"/>
    <property type="match status" value="1"/>
</dbReference>
<dbReference type="SUPFAM" id="SSF69765">
    <property type="entry name" value="IpsF-like"/>
    <property type="match status" value="1"/>
</dbReference>
<dbReference type="PROSITE" id="PS01350">
    <property type="entry name" value="ISPF"/>
    <property type="match status" value="1"/>
</dbReference>
<organism>
    <name type="scientific">Pseudomonas aeruginosa (strain UCBPP-PA14)</name>
    <dbReference type="NCBI Taxonomy" id="208963"/>
    <lineage>
        <taxon>Bacteria</taxon>
        <taxon>Pseudomonadati</taxon>
        <taxon>Pseudomonadota</taxon>
        <taxon>Gammaproteobacteria</taxon>
        <taxon>Pseudomonadales</taxon>
        <taxon>Pseudomonadaceae</taxon>
        <taxon>Pseudomonas</taxon>
    </lineage>
</organism>
<keyword id="KW-0414">Isoprene biosynthesis</keyword>
<keyword id="KW-0456">Lyase</keyword>
<keyword id="KW-0479">Metal-binding</keyword>
<proteinExistence type="inferred from homology"/>